<accession>Q2R237</accession>
<accession>A0A0P0Y3P9</accession>
<keyword id="KW-0150">Chloroplast</keyword>
<keyword id="KW-0472">Membrane</keyword>
<keyword id="KW-0934">Plastid</keyword>
<keyword id="KW-0653">Protein transport</keyword>
<keyword id="KW-1185">Reference proteome</keyword>
<keyword id="KW-0793">Thylakoid</keyword>
<keyword id="KW-0809">Transit peptide</keyword>
<keyword id="KW-0811">Translocation</keyword>
<keyword id="KW-0812">Transmembrane</keyword>
<keyword id="KW-1133">Transmembrane helix</keyword>
<keyword id="KW-0813">Transport</keyword>
<gene>
    <name type="primary">TATB</name>
    <name type="synonym">HCF106</name>
    <name type="ordered locus">Os11g0580800</name>
    <name type="ordered locus">LOC_Os11g37130</name>
    <name type="ORF">OsJ_34377</name>
</gene>
<protein>
    <recommendedName>
        <fullName>Sec-independent protein translocase protein TATB, chloroplastic</fullName>
    </recommendedName>
    <alternativeName>
        <fullName>Protein HIGH CHLOROPHYLL FLUORESCENCE 106</fullName>
    </alternativeName>
    <alternativeName>
        <fullName>Protein TWIN-ARGININE TRANSLOCATION B</fullName>
    </alternativeName>
</protein>
<sequence>MAVAGLLLRPPPCVAMCTPSPSPFPSSQRRRRRRLTLAQPYCTLGLSFVSGRHHRFLLRRRRRTESKRTSRGTGVYASLFGVGAPEALVIGVVALLVFGPKGLAEVARNLGKTLRAFQPTIRELQDVSREFRSTLEREIGLDEVPPSMNYRPPTMNNSQQPAIDQSSDDKPEAAPYTSEELIKVTEEQLAASAAAAWNTQEPPPSQQKEAAATSESNDGAISRGSDGAGAAMSEPNRNISEKTETER</sequence>
<dbReference type="EMBL" id="DP000010">
    <property type="protein sequence ID" value="ABA94503.2"/>
    <property type="molecule type" value="Genomic_DNA"/>
</dbReference>
<dbReference type="EMBL" id="AP008217">
    <property type="protein sequence ID" value="BAF28516.1"/>
    <property type="molecule type" value="Genomic_DNA"/>
</dbReference>
<dbReference type="EMBL" id="AP014967">
    <property type="protein sequence ID" value="BAT14603.1"/>
    <property type="molecule type" value="Genomic_DNA"/>
</dbReference>
<dbReference type="EMBL" id="CM000148">
    <property type="protein sequence ID" value="EEE52339.1"/>
    <property type="molecule type" value="Genomic_DNA"/>
</dbReference>
<dbReference type="EMBL" id="AK059555">
    <property type="status" value="NOT_ANNOTATED_CDS"/>
    <property type="molecule type" value="mRNA"/>
</dbReference>
<dbReference type="RefSeq" id="XP_015617558.1">
    <property type="nucleotide sequence ID" value="XM_015762072.1"/>
</dbReference>
<dbReference type="FunCoup" id="Q2R237">
    <property type="interactions" value="1"/>
</dbReference>
<dbReference type="STRING" id="39947.Q2R237"/>
<dbReference type="PaxDb" id="39947-Q2R237"/>
<dbReference type="EnsemblPlants" id="Os11t0580800-01">
    <property type="protein sequence ID" value="Os11t0580800-01"/>
    <property type="gene ID" value="Os11g0580800"/>
</dbReference>
<dbReference type="Gramene" id="Os11t0580800-01">
    <property type="protein sequence ID" value="Os11t0580800-01"/>
    <property type="gene ID" value="Os11g0580800"/>
</dbReference>
<dbReference type="KEGG" id="dosa:Os11g0580800"/>
<dbReference type="eggNOG" id="ENOG502QSWH">
    <property type="taxonomic scope" value="Eukaryota"/>
</dbReference>
<dbReference type="HOGENOM" id="CLU_072198_1_0_1"/>
<dbReference type="InParanoid" id="Q2R237"/>
<dbReference type="OMA" id="RAMRTIY"/>
<dbReference type="OrthoDB" id="2017985at2759"/>
<dbReference type="Proteomes" id="UP000000763">
    <property type="component" value="Chromosome 11"/>
</dbReference>
<dbReference type="Proteomes" id="UP000007752">
    <property type="component" value="Chromosome 11"/>
</dbReference>
<dbReference type="Proteomes" id="UP000059680">
    <property type="component" value="Chromosome 11"/>
</dbReference>
<dbReference type="GO" id="GO:0009535">
    <property type="term" value="C:chloroplast thylakoid membrane"/>
    <property type="evidence" value="ECO:0007669"/>
    <property type="project" value="UniProtKB-SubCell"/>
</dbReference>
<dbReference type="GO" id="GO:0043953">
    <property type="term" value="P:protein transport by the Tat complex"/>
    <property type="evidence" value="ECO:0007669"/>
    <property type="project" value="InterPro"/>
</dbReference>
<dbReference type="FunFam" id="1.20.5.3310:FF:000003">
    <property type="entry name" value="Sec-independent protein translocase protein TATB, chloroplastic"/>
    <property type="match status" value="1"/>
</dbReference>
<dbReference type="Gene3D" id="1.20.5.3310">
    <property type="match status" value="1"/>
</dbReference>
<dbReference type="InterPro" id="IPR003369">
    <property type="entry name" value="TatA/B/E"/>
</dbReference>
<dbReference type="InterPro" id="IPR006312">
    <property type="entry name" value="TatA/E"/>
</dbReference>
<dbReference type="NCBIfam" id="TIGR01411">
    <property type="entry name" value="tatAE"/>
    <property type="match status" value="1"/>
</dbReference>
<dbReference type="PANTHER" id="PTHR33162">
    <property type="entry name" value="SEC-INDEPENDENT PROTEIN TRANSLOCASE PROTEIN TATA, CHLOROPLASTIC"/>
    <property type="match status" value="1"/>
</dbReference>
<dbReference type="PANTHER" id="PTHR33162:SF3">
    <property type="entry name" value="SEC-INDEPENDENT PROTEIN TRANSLOCASE PROTEIN TATB, CHLOROPLASTIC"/>
    <property type="match status" value="1"/>
</dbReference>
<dbReference type="Pfam" id="PF02416">
    <property type="entry name" value="TatA_B_E"/>
    <property type="match status" value="1"/>
</dbReference>
<dbReference type="PRINTS" id="PR01506">
    <property type="entry name" value="TATBPROTEIN"/>
</dbReference>
<reference key="1">
    <citation type="journal article" date="2005" name="BMC Biol.">
        <title>The sequence of rice chromosomes 11 and 12, rich in disease resistance genes and recent gene duplications.</title>
        <authorList>
            <consortium name="The rice chromosomes 11 and 12 sequencing consortia"/>
        </authorList>
    </citation>
    <scope>NUCLEOTIDE SEQUENCE [LARGE SCALE GENOMIC DNA]</scope>
    <source>
        <strain>cv. Nipponbare</strain>
    </source>
</reference>
<reference key="2">
    <citation type="journal article" date="2005" name="Nature">
        <title>The map-based sequence of the rice genome.</title>
        <authorList>
            <consortium name="International rice genome sequencing project (IRGSP)"/>
        </authorList>
    </citation>
    <scope>NUCLEOTIDE SEQUENCE [LARGE SCALE GENOMIC DNA]</scope>
    <source>
        <strain>cv. Nipponbare</strain>
    </source>
</reference>
<reference key="3">
    <citation type="journal article" date="2008" name="Nucleic Acids Res.">
        <title>The rice annotation project database (RAP-DB): 2008 update.</title>
        <authorList>
            <consortium name="The rice annotation project (RAP)"/>
        </authorList>
    </citation>
    <scope>GENOME REANNOTATION</scope>
    <source>
        <strain>cv. Nipponbare</strain>
    </source>
</reference>
<reference key="4">
    <citation type="journal article" date="2013" name="Rice">
        <title>Improvement of the Oryza sativa Nipponbare reference genome using next generation sequence and optical map data.</title>
        <authorList>
            <person name="Kawahara Y."/>
            <person name="de la Bastide M."/>
            <person name="Hamilton J.P."/>
            <person name="Kanamori H."/>
            <person name="McCombie W.R."/>
            <person name="Ouyang S."/>
            <person name="Schwartz D.C."/>
            <person name="Tanaka T."/>
            <person name="Wu J."/>
            <person name="Zhou S."/>
            <person name="Childs K.L."/>
            <person name="Davidson R.M."/>
            <person name="Lin H."/>
            <person name="Quesada-Ocampo L."/>
            <person name="Vaillancourt B."/>
            <person name="Sakai H."/>
            <person name="Lee S.S."/>
            <person name="Kim J."/>
            <person name="Numa H."/>
            <person name="Itoh T."/>
            <person name="Buell C.R."/>
            <person name="Matsumoto T."/>
        </authorList>
    </citation>
    <scope>GENOME REANNOTATION</scope>
    <source>
        <strain>cv. Nipponbare</strain>
    </source>
</reference>
<reference key="5">
    <citation type="journal article" date="2005" name="PLoS Biol.">
        <title>The genomes of Oryza sativa: a history of duplications.</title>
        <authorList>
            <person name="Yu J."/>
            <person name="Wang J."/>
            <person name="Lin W."/>
            <person name="Li S."/>
            <person name="Li H."/>
            <person name="Zhou J."/>
            <person name="Ni P."/>
            <person name="Dong W."/>
            <person name="Hu S."/>
            <person name="Zeng C."/>
            <person name="Zhang J."/>
            <person name="Zhang Y."/>
            <person name="Li R."/>
            <person name="Xu Z."/>
            <person name="Li S."/>
            <person name="Li X."/>
            <person name="Zheng H."/>
            <person name="Cong L."/>
            <person name="Lin L."/>
            <person name="Yin J."/>
            <person name="Geng J."/>
            <person name="Li G."/>
            <person name="Shi J."/>
            <person name="Liu J."/>
            <person name="Lv H."/>
            <person name="Li J."/>
            <person name="Wang J."/>
            <person name="Deng Y."/>
            <person name="Ran L."/>
            <person name="Shi X."/>
            <person name="Wang X."/>
            <person name="Wu Q."/>
            <person name="Li C."/>
            <person name="Ren X."/>
            <person name="Wang J."/>
            <person name="Wang X."/>
            <person name="Li D."/>
            <person name="Liu D."/>
            <person name="Zhang X."/>
            <person name="Ji Z."/>
            <person name="Zhao W."/>
            <person name="Sun Y."/>
            <person name="Zhang Z."/>
            <person name="Bao J."/>
            <person name="Han Y."/>
            <person name="Dong L."/>
            <person name="Ji J."/>
            <person name="Chen P."/>
            <person name="Wu S."/>
            <person name="Liu J."/>
            <person name="Xiao Y."/>
            <person name="Bu D."/>
            <person name="Tan J."/>
            <person name="Yang L."/>
            <person name="Ye C."/>
            <person name="Zhang J."/>
            <person name="Xu J."/>
            <person name="Zhou Y."/>
            <person name="Yu Y."/>
            <person name="Zhang B."/>
            <person name="Zhuang S."/>
            <person name="Wei H."/>
            <person name="Liu B."/>
            <person name="Lei M."/>
            <person name="Yu H."/>
            <person name="Li Y."/>
            <person name="Xu H."/>
            <person name="Wei S."/>
            <person name="He X."/>
            <person name="Fang L."/>
            <person name="Zhang Z."/>
            <person name="Zhang Y."/>
            <person name="Huang X."/>
            <person name="Su Z."/>
            <person name="Tong W."/>
            <person name="Li J."/>
            <person name="Tong Z."/>
            <person name="Li S."/>
            <person name="Ye J."/>
            <person name="Wang L."/>
            <person name="Fang L."/>
            <person name="Lei T."/>
            <person name="Chen C.-S."/>
            <person name="Chen H.-C."/>
            <person name="Xu Z."/>
            <person name="Li H."/>
            <person name="Huang H."/>
            <person name="Zhang F."/>
            <person name="Xu H."/>
            <person name="Li N."/>
            <person name="Zhao C."/>
            <person name="Li S."/>
            <person name="Dong L."/>
            <person name="Huang Y."/>
            <person name="Li L."/>
            <person name="Xi Y."/>
            <person name="Qi Q."/>
            <person name="Li W."/>
            <person name="Zhang B."/>
            <person name="Hu W."/>
            <person name="Zhang Y."/>
            <person name="Tian X."/>
            <person name="Jiao Y."/>
            <person name="Liang X."/>
            <person name="Jin J."/>
            <person name="Gao L."/>
            <person name="Zheng W."/>
            <person name="Hao B."/>
            <person name="Liu S.-M."/>
            <person name="Wang W."/>
            <person name="Yuan L."/>
            <person name="Cao M."/>
            <person name="McDermott J."/>
            <person name="Samudrala R."/>
            <person name="Wang J."/>
            <person name="Wong G.K.-S."/>
            <person name="Yang H."/>
        </authorList>
    </citation>
    <scope>NUCLEOTIDE SEQUENCE [LARGE SCALE GENOMIC DNA]</scope>
    <source>
        <strain>cv. Nipponbare</strain>
    </source>
</reference>
<reference key="6">
    <citation type="journal article" date="2003" name="Science">
        <title>Collection, mapping, and annotation of over 28,000 cDNA clones from japonica rice.</title>
        <authorList>
            <consortium name="The rice full-length cDNA consortium"/>
        </authorList>
    </citation>
    <scope>NUCLEOTIDE SEQUENCE [LARGE SCALE MRNA]</scope>
    <source>
        <strain>cv. Nipponbare</strain>
    </source>
</reference>
<comment type="function">
    <text evidence="2">Part of the twin-arginine translocation (Tat) system that transports large folded proteins containing a characteristic twin-arginine motif in their signal peptide across the thylakoid membrane. Involved in delta pH-dependent protein transport required for chloroplast development, especially thylakoid membrane formation. TATC and TATB mediate precursor recognition, whereas TATA facilitates translocation.</text>
</comment>
<comment type="subunit">
    <text evidence="1">In thylakoid membranes, TATC and TATB form a large receptor complex, containing about eight TATC-TATB pairs, which binds the precursor protein. Twin arginine signal peptide promotes pH-triggered docking of TATA oligomers to TATC-TATB receptor complex, inducing a conformational switch of TATA that results in activation of the translocase. TATA dissociates from TATC-TATB upon completion of translocation (By similarity).</text>
</comment>
<comment type="subcellular location">
    <subcellularLocation>
        <location evidence="1">Plastid</location>
        <location evidence="1">Chloroplast thylakoid membrane</location>
        <topology evidence="1">Single-pass membrane protein</topology>
    </subcellularLocation>
    <text evidence="1">The C-terminus is located in the stroma.</text>
</comment>
<comment type="similarity">
    <text evidence="5">Belongs to the TatB family.</text>
</comment>
<name>TATB_ORYSJ</name>
<proteinExistence type="evidence at transcript level"/>
<organism>
    <name type="scientific">Oryza sativa subsp. japonica</name>
    <name type="common">Rice</name>
    <dbReference type="NCBI Taxonomy" id="39947"/>
    <lineage>
        <taxon>Eukaryota</taxon>
        <taxon>Viridiplantae</taxon>
        <taxon>Streptophyta</taxon>
        <taxon>Embryophyta</taxon>
        <taxon>Tracheophyta</taxon>
        <taxon>Spermatophyta</taxon>
        <taxon>Magnoliopsida</taxon>
        <taxon>Liliopsida</taxon>
        <taxon>Poales</taxon>
        <taxon>Poaceae</taxon>
        <taxon>BOP clade</taxon>
        <taxon>Oryzoideae</taxon>
        <taxon>Oryzeae</taxon>
        <taxon>Oryzinae</taxon>
        <taxon>Oryza</taxon>
        <taxon>Oryza sativa</taxon>
    </lineage>
</organism>
<evidence type="ECO:0000250" key="1"/>
<evidence type="ECO:0000250" key="2">
    <source>
        <dbReference type="UniProtKB" id="O48950"/>
    </source>
</evidence>
<evidence type="ECO:0000255" key="3"/>
<evidence type="ECO:0000256" key="4">
    <source>
        <dbReference type="SAM" id="MobiDB-lite"/>
    </source>
</evidence>
<evidence type="ECO:0000305" key="5"/>
<feature type="transit peptide" description="Chloroplast" evidence="3">
    <location>
        <begin position="1"/>
        <end position="76"/>
    </location>
</feature>
<feature type="chain" id="PRO_0000419917" description="Sec-independent protein translocase protein TATB, chloroplastic">
    <location>
        <begin position="77"/>
        <end position="247"/>
    </location>
</feature>
<feature type="topological domain" description="Lumenal" evidence="3">
    <location>
        <begin position="77"/>
        <end position="78"/>
    </location>
</feature>
<feature type="transmembrane region" description="Helical" evidence="3">
    <location>
        <begin position="79"/>
        <end position="99"/>
    </location>
</feature>
<feature type="topological domain" description="Stromal" evidence="3">
    <location>
        <begin position="100"/>
        <end position="247"/>
    </location>
</feature>
<feature type="region of interest" description="Disordered" evidence="4">
    <location>
        <begin position="137"/>
        <end position="247"/>
    </location>
</feature>
<feature type="compositionally biased region" description="Polar residues" evidence="4">
    <location>
        <begin position="154"/>
        <end position="165"/>
    </location>
</feature>
<feature type="sequence conflict" description="In Ref. 6; AK059555." evidence="5" ref="6">
    <original>T</original>
    <variation>A</variation>
    <location>
        <position position="213"/>
    </location>
</feature>